<name>ATP5E_RAT</name>
<reference key="1">
    <citation type="submission" date="1997-06" db="EMBL/GenBank/DDBJ databases">
        <authorList>
            <person name="Lo Piero A.R."/>
            <person name="Pedersen P.L."/>
        </authorList>
    </citation>
    <scope>NUCLEOTIDE SEQUENCE [MRNA]</scope>
</reference>
<reference key="2">
    <citation type="journal article" date="2004" name="Genome Res.">
        <title>The status, quality, and expansion of the NIH full-length cDNA project: the Mammalian Gene Collection (MGC).</title>
        <authorList>
            <consortium name="The MGC Project Team"/>
        </authorList>
    </citation>
    <scope>NUCLEOTIDE SEQUENCE [LARGE SCALE MRNA]</scope>
    <source>
        <tissue>Pituitary</tissue>
    </source>
</reference>
<reference key="3">
    <citation type="journal article" date="1992" name="J. Biol. Chem.">
        <title>A simple, rapid method for purification of epsilon-subunit, coupling factor 6, subunit d, and subunit e from rat liver H(+)-ATP synthase and determination of the complete amino acid sequence of epsilon-subunit.</title>
        <authorList>
            <person name="Higuti T."/>
            <person name="Yoshihara Y."/>
            <person name="Kuroiwa K."/>
            <person name="Kawamura Y."/>
            <person name="Toda H."/>
            <person name="Sakiyama F."/>
        </authorList>
    </citation>
    <scope>PROTEIN SEQUENCE OF 2-51</scope>
    <source>
        <tissue>Liver</tissue>
    </source>
</reference>
<reference key="4">
    <citation type="submission" date="1991-02" db="PIR data bank">
        <authorList>
            <person name="Godinot C."/>
        </authorList>
    </citation>
    <scope>PROTEIN SEQUENCE OF 2-25</scope>
</reference>
<reference key="5">
    <citation type="submission" date="2007-07" db="UniProtKB">
        <authorList>
            <person name="Lubec G."/>
            <person name="Kang S.U."/>
        </authorList>
    </citation>
    <scope>PROTEIN SEQUENCE OF 7-14</scope>
    <scope>IDENTIFICATION BY MASS SPECTROMETRY</scope>
    <source>
        <strain>Sprague-Dawley</strain>
        <tissue>Brain</tissue>
    </source>
</reference>
<reference key="6">
    <citation type="journal article" date="2007" name="Mol. Cell. Proteomics">
        <title>Identification of two proteins associated with mammalian ATP synthase.</title>
        <authorList>
            <person name="Meyer B."/>
            <person name="Wittig I."/>
            <person name="Trifilieff E."/>
            <person name="Karas M."/>
            <person name="Schaegger H."/>
        </authorList>
    </citation>
    <scope>IDENTIFICATION BY MASS SPECTROMETRY</scope>
    <scope>IDENTIFICATION IN THE ATP SYNTHASE COMPLEX</scope>
</reference>
<organism>
    <name type="scientific">Rattus norvegicus</name>
    <name type="common">Rat</name>
    <dbReference type="NCBI Taxonomy" id="10116"/>
    <lineage>
        <taxon>Eukaryota</taxon>
        <taxon>Metazoa</taxon>
        <taxon>Chordata</taxon>
        <taxon>Craniata</taxon>
        <taxon>Vertebrata</taxon>
        <taxon>Euteleostomi</taxon>
        <taxon>Mammalia</taxon>
        <taxon>Eutheria</taxon>
        <taxon>Euarchontoglires</taxon>
        <taxon>Glires</taxon>
        <taxon>Rodentia</taxon>
        <taxon>Myomorpha</taxon>
        <taxon>Muroidea</taxon>
        <taxon>Muridae</taxon>
        <taxon>Murinae</taxon>
        <taxon>Rattus</taxon>
    </lineage>
</organism>
<protein>
    <recommendedName>
        <fullName evidence="7">ATP synthase F(1) complex subunit epsilon, mitochondrial</fullName>
        <shortName>ATPase subunit epsilon</shortName>
    </recommendedName>
    <alternativeName>
        <fullName evidence="8">ATP synthase F1 subunit epsilon</fullName>
    </alternativeName>
</protein>
<sequence>MVAYWRQAGLSYIRFSQICAKAVRDALKTEFKANAEKTSGTSIKTVKIKKE</sequence>
<evidence type="ECO:0000250" key="1">
    <source>
        <dbReference type="UniProtKB" id="P19483"/>
    </source>
</evidence>
<evidence type="ECO:0000250" key="2">
    <source>
        <dbReference type="UniProtKB" id="P56381"/>
    </source>
</evidence>
<evidence type="ECO:0000250" key="3">
    <source>
        <dbReference type="UniProtKB" id="P56382"/>
    </source>
</evidence>
<evidence type="ECO:0000269" key="4">
    <source>
    </source>
</evidence>
<evidence type="ECO:0000269" key="5">
    <source>
    </source>
</evidence>
<evidence type="ECO:0000269" key="6">
    <source ref="4"/>
</evidence>
<evidence type="ECO:0000305" key="7"/>
<evidence type="ECO:0000312" key="8">
    <source>
        <dbReference type="RGD" id="621374"/>
    </source>
</evidence>
<comment type="function">
    <text evidence="1 2">Subunit epsilon, of the mitochondrial membrane ATP synthase complex (F(1)F(0) ATP synthase or Complex V) that produces ATP from ADP in the presence of a proton gradient across the membrane which is generated by electron transport complexes of the respiratory chain. ATP synthase complex consist of a soluble F(1) head domain - the catalytic core - and a membrane F(1) domain - the membrane proton channel. These two domains are linked by a central stalk rotating inside the F(1) region and a stationary peripheral stalk. During catalysis, ATP synthesis in the catalytic domain of F(1) is coupled via a rotary mechanism of the central stalk subunits to proton translocation (By similarity). In vivo, can only synthesize ATP although its ATP hydrolase activity can be activated artificially in vitro (By similarity). May be essential for the assembly of F(1) and may play an important role in the incorporation of the hydrophobic subunit c into the F(1)-c oligomer rotor of the mitochondrial ATP synthase complex (By similarity).</text>
</comment>
<comment type="subunit">
    <text evidence="2 5">Component of the ATP synthase complex composed at least of ATP5F1A/subunit alpha, ATP5F1B/subunit beta, ATP5MC1/subunit c (homooctomer), MT-ATP6/subunit a, MT-ATP8/subunit 8, ATP5ME/subunit e, ATP5MF/subunit f, ATP5MG/subunit g, ATP5MK/subunit k, ATP5MJ/subunit j, ATP5F1C/subunit gamma, ATP5F1D/subunit delta, ATP5F1E/subunit epsilon, ATP5PF/subunit F6, ATP5PB/subunit b, ATP5PD/subunit d, ATP5PO/subunit OSCP (PubMed:17575325). ATP synthase complex consists of a soluble F(1) head domain (subunits alpha(3) and beta(3)) - the catalytic core - and a membrane F(0) domain - the membrane proton channel (subunits c, a, 8, e, f, g, k and j). These two domains are linked by a central stalk (subunits gamma, delta, and epsilon) rotating inside the F1 region and a stationary peripheral stalk (subunits F6, b, d, and OSCP) (By similarity).</text>
</comment>
<comment type="subcellular location">
    <subcellularLocation>
        <location>Mitochondrion</location>
    </subcellularLocation>
    <subcellularLocation>
        <location>Mitochondrion inner membrane</location>
    </subcellularLocation>
</comment>
<comment type="similarity">
    <text evidence="7">Belongs to the eukaryotic ATPase epsilon family.</text>
</comment>
<proteinExistence type="evidence at protein level"/>
<dbReference type="EMBL" id="AF010323">
    <property type="protein sequence ID" value="AAB64162.1"/>
    <property type="molecule type" value="mRNA"/>
</dbReference>
<dbReference type="EMBL" id="BC058133">
    <property type="protein sequence ID" value="AAH58133.1"/>
    <property type="molecule type" value="mRNA"/>
</dbReference>
<dbReference type="PIR" id="B44300">
    <property type="entry name" value="B44300"/>
</dbReference>
<dbReference type="RefSeq" id="NP_620799.1">
    <property type="nucleotide sequence ID" value="NM_139099.2"/>
</dbReference>
<dbReference type="SMR" id="P29418"/>
<dbReference type="CORUM" id="P29418"/>
<dbReference type="FunCoup" id="P29418">
    <property type="interactions" value="333"/>
</dbReference>
<dbReference type="STRING" id="10116.ENSRNOP00000067815"/>
<dbReference type="GlyGen" id="P29418">
    <property type="glycosylation" value="1 site, 1 O-linked glycan (1 site)"/>
</dbReference>
<dbReference type="iPTMnet" id="P29418"/>
<dbReference type="PhosphoSitePlus" id="P29418"/>
<dbReference type="SwissPalm" id="P29418"/>
<dbReference type="jPOST" id="P29418"/>
<dbReference type="PaxDb" id="10116-ENSRNOP00000067815"/>
<dbReference type="GeneID" id="245958"/>
<dbReference type="KEGG" id="rno:245958"/>
<dbReference type="AGR" id="RGD:621374"/>
<dbReference type="CTD" id="514"/>
<dbReference type="RGD" id="621374">
    <property type="gene designation" value="Atp5f1e"/>
</dbReference>
<dbReference type="VEuPathDB" id="HostDB:ENSRNOG00000049912"/>
<dbReference type="eggNOG" id="KOG3495">
    <property type="taxonomic scope" value="Eukaryota"/>
</dbReference>
<dbReference type="HOGENOM" id="CLU_187039_4_0_1"/>
<dbReference type="InParanoid" id="P29418"/>
<dbReference type="OrthoDB" id="269124at2759"/>
<dbReference type="PhylomeDB" id="P29418"/>
<dbReference type="Reactome" id="R-RNO-163210">
    <property type="pathway name" value="Formation of ATP by chemiosmotic coupling"/>
</dbReference>
<dbReference type="Reactome" id="R-RNO-8949613">
    <property type="pathway name" value="Cristae formation"/>
</dbReference>
<dbReference type="PRO" id="PR:P29418"/>
<dbReference type="Proteomes" id="UP000002494">
    <property type="component" value="Chromosome 3"/>
</dbReference>
<dbReference type="Bgee" id="ENSRNOG00000049912">
    <property type="expression patterns" value="Expressed in heart and 20 other cell types or tissues"/>
</dbReference>
<dbReference type="GO" id="GO:0005743">
    <property type="term" value="C:mitochondrial inner membrane"/>
    <property type="evidence" value="ECO:0000314"/>
    <property type="project" value="RGD"/>
</dbReference>
<dbReference type="GO" id="GO:0045259">
    <property type="term" value="C:proton-transporting ATP synthase complex"/>
    <property type="evidence" value="ECO:0000314"/>
    <property type="project" value="UniProtKB"/>
</dbReference>
<dbReference type="GO" id="GO:0044877">
    <property type="term" value="F:protein-containing complex binding"/>
    <property type="evidence" value="ECO:0000314"/>
    <property type="project" value="RGD"/>
</dbReference>
<dbReference type="GO" id="GO:0046933">
    <property type="term" value="F:proton-transporting ATP synthase activity, rotational mechanism"/>
    <property type="evidence" value="ECO:0007669"/>
    <property type="project" value="InterPro"/>
</dbReference>
<dbReference type="GO" id="GO:0042776">
    <property type="term" value="P:proton motive force-driven mitochondrial ATP synthesis"/>
    <property type="evidence" value="ECO:0000266"/>
    <property type="project" value="RGD"/>
</dbReference>
<dbReference type="CDD" id="cd12153">
    <property type="entry name" value="F1-ATPase_epsilon"/>
    <property type="match status" value="1"/>
</dbReference>
<dbReference type="FunFam" id="1.10.1620.20:FF:000001">
    <property type="entry name" value="ATP synthase subunit epsilon, mitochondrial"/>
    <property type="match status" value="1"/>
</dbReference>
<dbReference type="Gene3D" id="1.10.1620.20">
    <property type="entry name" value="ATP synthase, F1 complex, epsilon subunit superfamily, mitochondrial"/>
    <property type="match status" value="1"/>
</dbReference>
<dbReference type="InterPro" id="IPR006721">
    <property type="entry name" value="ATP_synth_F1_esu_mt"/>
</dbReference>
<dbReference type="InterPro" id="IPR036742">
    <property type="entry name" value="ATP_synth_F1_esu_sf_mt"/>
</dbReference>
<dbReference type="PANTHER" id="PTHR12448">
    <property type="entry name" value="ATP SYNTHASE EPSILON CHAIN, MITOCHONDRIAL"/>
    <property type="match status" value="1"/>
</dbReference>
<dbReference type="PANTHER" id="PTHR12448:SF0">
    <property type="entry name" value="ATP SYNTHASE SUBUNIT EPSILON, MITOCHONDRIAL"/>
    <property type="match status" value="1"/>
</dbReference>
<dbReference type="Pfam" id="PF04627">
    <property type="entry name" value="ATP-synt_Eps"/>
    <property type="match status" value="1"/>
</dbReference>
<dbReference type="SUPFAM" id="SSF48690">
    <property type="entry name" value="Epsilon subunit of mitochondrial F1F0-ATP synthase"/>
    <property type="match status" value="1"/>
</dbReference>
<accession>P29418</accession>
<gene>
    <name evidence="8" type="primary">Atp5f1e</name>
    <name type="synonym">Atp5e</name>
</gene>
<keyword id="KW-0007">Acetylation</keyword>
<keyword id="KW-0066">ATP synthesis</keyword>
<keyword id="KW-0139">CF(1)</keyword>
<keyword id="KW-0903">Direct protein sequencing</keyword>
<keyword id="KW-0375">Hydrogen ion transport</keyword>
<keyword id="KW-0406">Ion transport</keyword>
<keyword id="KW-0472">Membrane</keyword>
<keyword id="KW-0496">Mitochondrion</keyword>
<keyword id="KW-0999">Mitochondrion inner membrane</keyword>
<keyword id="KW-1185">Reference proteome</keyword>
<keyword id="KW-0813">Transport</keyword>
<feature type="initiator methionine" description="Removed" evidence="4 6">
    <location>
        <position position="1"/>
    </location>
</feature>
<feature type="chain" id="PRO_0000071664" description="ATP synthase F(1) complex subunit epsilon, mitochondrial">
    <location>
        <begin position="2"/>
        <end position="51"/>
    </location>
</feature>
<feature type="modified residue" description="N6-acetyllysine; alternate" evidence="2">
    <location>
        <position position="21"/>
    </location>
</feature>
<feature type="modified residue" description="N6-succinyllysine; alternate" evidence="3">
    <location>
        <position position="21"/>
    </location>
</feature>
<feature type="modified residue" description="N6-acetyllysine; alternate" evidence="3">
    <location>
        <position position="32"/>
    </location>
</feature>
<feature type="modified residue" description="N6-succinyllysine; alternate" evidence="3">
    <location>
        <position position="32"/>
    </location>
</feature>
<feature type="modified residue" description="N6-acetyllysine; alternate" evidence="3">
    <location>
        <position position="37"/>
    </location>
</feature>
<feature type="modified residue" description="N6-succinyllysine; alternate" evidence="3">
    <location>
        <position position="37"/>
    </location>
</feature>
<feature type="modified residue" description="N6-acetyllysine" evidence="3">
    <location>
        <position position="44"/>
    </location>
</feature>